<sequence length="282" mass="31137">MAGAGLIIIKRRIKSITNTKKITNAMGLIATSNLRKSRQNLEANKAYYEAFNDVINKIVSSSSKSNLYVAGNKSDKKLYIALTSDSGLCGGFNGAVVTAADNVMRGDKDKSLLITVGQKGISYFKRLKYETLSEYVDIPNEPGLKEAKEIADRALSLYEKGEIGEVHVIYTQFLSTVNQKVEVKKVLPIEPKKMEKVSVAEFEPDAEIILEKAIRLHIEQQLFNLLLNSKASEQASRMSSMDSATKNANDLLDALNIKYNRIRQSAITQEITEIVGGAEALK</sequence>
<dbReference type="EMBL" id="AF101055">
    <property type="protein sequence ID" value="AAD16425.1"/>
    <property type="molecule type" value="Genomic_DNA"/>
</dbReference>
<dbReference type="EMBL" id="AE001437">
    <property type="protein sequence ID" value="AAK80809.1"/>
    <property type="molecule type" value="Genomic_DNA"/>
</dbReference>
<dbReference type="PIR" id="F97252">
    <property type="entry name" value="F97252"/>
</dbReference>
<dbReference type="RefSeq" id="NP_349469.1">
    <property type="nucleotide sequence ID" value="NC_003030.1"/>
</dbReference>
<dbReference type="RefSeq" id="WP_010966150.1">
    <property type="nucleotide sequence ID" value="NC_003030.1"/>
</dbReference>
<dbReference type="SMR" id="Q9Z688"/>
<dbReference type="STRING" id="272562.CA_C2866"/>
<dbReference type="GeneID" id="44999354"/>
<dbReference type="KEGG" id="cac:CA_C2866"/>
<dbReference type="PATRIC" id="fig|272562.8.peg.3050"/>
<dbReference type="eggNOG" id="COG0224">
    <property type="taxonomic scope" value="Bacteria"/>
</dbReference>
<dbReference type="HOGENOM" id="CLU_050669_0_1_9"/>
<dbReference type="OrthoDB" id="9812769at2"/>
<dbReference type="Proteomes" id="UP000000814">
    <property type="component" value="Chromosome"/>
</dbReference>
<dbReference type="GO" id="GO:0005886">
    <property type="term" value="C:plasma membrane"/>
    <property type="evidence" value="ECO:0007669"/>
    <property type="project" value="UniProtKB-SubCell"/>
</dbReference>
<dbReference type="GO" id="GO:0045259">
    <property type="term" value="C:proton-transporting ATP synthase complex"/>
    <property type="evidence" value="ECO:0007669"/>
    <property type="project" value="UniProtKB-KW"/>
</dbReference>
<dbReference type="GO" id="GO:0005524">
    <property type="term" value="F:ATP binding"/>
    <property type="evidence" value="ECO:0007669"/>
    <property type="project" value="UniProtKB-UniRule"/>
</dbReference>
<dbReference type="GO" id="GO:0046933">
    <property type="term" value="F:proton-transporting ATP synthase activity, rotational mechanism"/>
    <property type="evidence" value="ECO:0007669"/>
    <property type="project" value="UniProtKB-UniRule"/>
</dbReference>
<dbReference type="GO" id="GO:0042777">
    <property type="term" value="P:proton motive force-driven plasma membrane ATP synthesis"/>
    <property type="evidence" value="ECO:0007669"/>
    <property type="project" value="UniProtKB-UniRule"/>
</dbReference>
<dbReference type="CDD" id="cd12151">
    <property type="entry name" value="F1-ATPase_gamma"/>
    <property type="match status" value="1"/>
</dbReference>
<dbReference type="Gene3D" id="3.40.1380.10">
    <property type="match status" value="1"/>
</dbReference>
<dbReference type="Gene3D" id="1.10.287.80">
    <property type="entry name" value="ATP synthase, gamma subunit, helix hairpin domain"/>
    <property type="match status" value="1"/>
</dbReference>
<dbReference type="HAMAP" id="MF_00815">
    <property type="entry name" value="ATP_synth_gamma_bact"/>
    <property type="match status" value="1"/>
</dbReference>
<dbReference type="InterPro" id="IPR035968">
    <property type="entry name" value="ATP_synth_F1_ATPase_gsu"/>
</dbReference>
<dbReference type="InterPro" id="IPR000131">
    <property type="entry name" value="ATP_synth_F1_gsu"/>
</dbReference>
<dbReference type="InterPro" id="IPR023632">
    <property type="entry name" value="ATP_synth_F1_gsu_CS"/>
</dbReference>
<dbReference type="NCBIfam" id="TIGR01146">
    <property type="entry name" value="ATPsyn_F1gamma"/>
    <property type="match status" value="1"/>
</dbReference>
<dbReference type="PANTHER" id="PTHR11693">
    <property type="entry name" value="ATP SYNTHASE GAMMA CHAIN"/>
    <property type="match status" value="1"/>
</dbReference>
<dbReference type="PANTHER" id="PTHR11693:SF22">
    <property type="entry name" value="ATP SYNTHASE SUBUNIT GAMMA, MITOCHONDRIAL"/>
    <property type="match status" value="1"/>
</dbReference>
<dbReference type="Pfam" id="PF00231">
    <property type="entry name" value="ATP-synt"/>
    <property type="match status" value="1"/>
</dbReference>
<dbReference type="PRINTS" id="PR00126">
    <property type="entry name" value="ATPASEGAMMA"/>
</dbReference>
<dbReference type="SUPFAM" id="SSF52943">
    <property type="entry name" value="ATP synthase (F1-ATPase), gamma subunit"/>
    <property type="match status" value="1"/>
</dbReference>
<dbReference type="PROSITE" id="PS00153">
    <property type="entry name" value="ATPASE_GAMMA"/>
    <property type="match status" value="1"/>
</dbReference>
<name>ATPG_CLOAB</name>
<reference key="1">
    <citation type="journal article" date="2000" name="DNA Seq.">
        <title>Sequence analysis of the atp operon of Clostridium acetobutylicum DSM 792 encoding the F0F1 ATP synthase.</title>
        <authorList>
            <person name="Externbrink T."/>
            <person name="Hujer S."/>
            <person name="Winzer K."/>
            <person name="Duerre P."/>
        </authorList>
    </citation>
    <scope>NUCLEOTIDE SEQUENCE [GENOMIC DNA]</scope>
    <source>
        <strain>ATCC 824 / DSM 792 / JCM 1419 / IAM 19013 / LMG 5710 / NBRC 13948 / NRRL B-527 / VKM B-1787 / 2291 / W</strain>
    </source>
</reference>
<reference key="2">
    <citation type="journal article" date="2001" name="J. Bacteriol.">
        <title>Genome sequence and comparative analysis of the solvent-producing bacterium Clostridium acetobutylicum.</title>
        <authorList>
            <person name="Noelling J."/>
            <person name="Breton G."/>
            <person name="Omelchenko M.V."/>
            <person name="Makarova K.S."/>
            <person name="Zeng Q."/>
            <person name="Gibson R."/>
            <person name="Lee H.M."/>
            <person name="Dubois J."/>
            <person name="Qiu D."/>
            <person name="Hitti J."/>
            <person name="Wolf Y.I."/>
            <person name="Tatusov R.L."/>
            <person name="Sabathe F."/>
            <person name="Doucette-Stamm L.A."/>
            <person name="Soucaille P."/>
            <person name="Daly M.J."/>
            <person name="Bennett G.N."/>
            <person name="Koonin E.V."/>
            <person name="Smith D.R."/>
        </authorList>
    </citation>
    <scope>NUCLEOTIDE SEQUENCE [LARGE SCALE GENOMIC DNA]</scope>
    <source>
        <strain>ATCC 824 / DSM 792 / JCM 1419 / IAM 19013 / LMG 5710 / NBRC 13948 / NRRL B-527 / VKM B-1787 / 2291 / W</strain>
    </source>
</reference>
<gene>
    <name evidence="1" type="primary">atpG</name>
    <name type="ordered locus">CA_C2866</name>
</gene>
<organism>
    <name type="scientific">Clostridium acetobutylicum (strain ATCC 824 / DSM 792 / JCM 1419 / IAM 19013 / LMG 5710 / NBRC 13948 / NRRL B-527 / VKM B-1787 / 2291 / W)</name>
    <dbReference type="NCBI Taxonomy" id="272562"/>
    <lineage>
        <taxon>Bacteria</taxon>
        <taxon>Bacillati</taxon>
        <taxon>Bacillota</taxon>
        <taxon>Clostridia</taxon>
        <taxon>Eubacteriales</taxon>
        <taxon>Clostridiaceae</taxon>
        <taxon>Clostridium</taxon>
    </lineage>
</organism>
<protein>
    <recommendedName>
        <fullName evidence="1">ATP synthase gamma chain</fullName>
    </recommendedName>
    <alternativeName>
        <fullName evidence="1">ATP synthase F1 sector gamma subunit</fullName>
    </alternativeName>
    <alternativeName>
        <fullName evidence="1">F-ATPase gamma subunit</fullName>
    </alternativeName>
</protein>
<accession>Q9Z688</accession>
<keyword id="KW-0066">ATP synthesis</keyword>
<keyword id="KW-1003">Cell membrane</keyword>
<keyword id="KW-0139">CF(1)</keyword>
<keyword id="KW-0375">Hydrogen ion transport</keyword>
<keyword id="KW-0406">Ion transport</keyword>
<keyword id="KW-0472">Membrane</keyword>
<keyword id="KW-1185">Reference proteome</keyword>
<keyword id="KW-0813">Transport</keyword>
<feature type="chain" id="PRO_0000073265" description="ATP synthase gamma chain">
    <location>
        <begin position="1"/>
        <end position="282"/>
    </location>
</feature>
<evidence type="ECO:0000255" key="1">
    <source>
        <dbReference type="HAMAP-Rule" id="MF_00815"/>
    </source>
</evidence>
<comment type="function">
    <text evidence="1">Produces ATP from ADP in the presence of a proton gradient across the membrane. The gamma chain is believed to be important in regulating ATPase activity and the flow of protons through the CF(0) complex.</text>
</comment>
<comment type="subunit">
    <text evidence="1">F-type ATPases have 2 components, CF(1) - the catalytic core - and CF(0) - the membrane proton channel. CF(1) has five subunits: alpha(3), beta(3), gamma(1), delta(1), epsilon(1). CF(0) has three main subunits: a, b and c.</text>
</comment>
<comment type="subcellular location">
    <subcellularLocation>
        <location evidence="1">Cell membrane</location>
        <topology evidence="1">Peripheral membrane protein</topology>
    </subcellularLocation>
</comment>
<comment type="similarity">
    <text evidence="1">Belongs to the ATPase gamma chain family.</text>
</comment>
<proteinExistence type="inferred from homology"/>